<organism>
    <name type="scientific">Mycoplasmopsis pulmonis (strain UAB CTIP)</name>
    <name type="common">Mycoplasma pulmonis</name>
    <dbReference type="NCBI Taxonomy" id="272635"/>
    <lineage>
        <taxon>Bacteria</taxon>
        <taxon>Bacillati</taxon>
        <taxon>Mycoplasmatota</taxon>
        <taxon>Mycoplasmoidales</taxon>
        <taxon>Metamycoplasmataceae</taxon>
        <taxon>Mycoplasmopsis</taxon>
    </lineage>
</organism>
<proteinExistence type="inferred from homology"/>
<protein>
    <recommendedName>
        <fullName evidence="1">GTPase Obg</fullName>
        <ecNumber evidence="1">3.6.5.-</ecNumber>
    </recommendedName>
    <alternativeName>
        <fullName evidence="1">GTP-binding protein Obg</fullName>
    </alternativeName>
</protein>
<dbReference type="EC" id="3.6.5.-" evidence="1"/>
<dbReference type="EMBL" id="AL445564">
    <property type="protein sequence ID" value="CAC13526.1"/>
    <property type="molecule type" value="Genomic_DNA"/>
</dbReference>
<dbReference type="PIR" id="A90556">
    <property type="entry name" value="A90556"/>
</dbReference>
<dbReference type="RefSeq" id="WP_010925157.1">
    <property type="nucleotide sequence ID" value="NC_002771.1"/>
</dbReference>
<dbReference type="SMR" id="Q98QK8"/>
<dbReference type="STRING" id="272635.gene:17576944"/>
<dbReference type="KEGG" id="mpu:MYPU_3530"/>
<dbReference type="eggNOG" id="COG0536">
    <property type="taxonomic scope" value="Bacteria"/>
</dbReference>
<dbReference type="HOGENOM" id="CLU_011747_2_1_14"/>
<dbReference type="BioCyc" id="MPUL272635:G1GT6-353-MONOMER"/>
<dbReference type="Proteomes" id="UP000000528">
    <property type="component" value="Chromosome"/>
</dbReference>
<dbReference type="GO" id="GO:0005737">
    <property type="term" value="C:cytoplasm"/>
    <property type="evidence" value="ECO:0007669"/>
    <property type="project" value="UniProtKB-SubCell"/>
</dbReference>
<dbReference type="GO" id="GO:0005525">
    <property type="term" value="F:GTP binding"/>
    <property type="evidence" value="ECO:0007669"/>
    <property type="project" value="UniProtKB-UniRule"/>
</dbReference>
<dbReference type="GO" id="GO:0003924">
    <property type="term" value="F:GTPase activity"/>
    <property type="evidence" value="ECO:0007669"/>
    <property type="project" value="UniProtKB-UniRule"/>
</dbReference>
<dbReference type="GO" id="GO:0000287">
    <property type="term" value="F:magnesium ion binding"/>
    <property type="evidence" value="ECO:0007669"/>
    <property type="project" value="InterPro"/>
</dbReference>
<dbReference type="GO" id="GO:0042254">
    <property type="term" value="P:ribosome biogenesis"/>
    <property type="evidence" value="ECO:0007669"/>
    <property type="project" value="UniProtKB-UniRule"/>
</dbReference>
<dbReference type="CDD" id="cd01898">
    <property type="entry name" value="Obg"/>
    <property type="match status" value="1"/>
</dbReference>
<dbReference type="FunFam" id="2.70.210.12:FF:000001">
    <property type="entry name" value="GTPase Obg"/>
    <property type="match status" value="1"/>
</dbReference>
<dbReference type="Gene3D" id="3.30.300.350">
    <property type="entry name" value="GTP-binding protein OBG, C-terminal domain"/>
    <property type="match status" value="1"/>
</dbReference>
<dbReference type="Gene3D" id="2.70.210.12">
    <property type="entry name" value="GTP1/OBG domain"/>
    <property type="match status" value="1"/>
</dbReference>
<dbReference type="Gene3D" id="3.40.50.300">
    <property type="entry name" value="P-loop containing nucleotide triphosphate hydrolases"/>
    <property type="match status" value="1"/>
</dbReference>
<dbReference type="HAMAP" id="MF_01454">
    <property type="entry name" value="GTPase_Obg"/>
    <property type="match status" value="1"/>
</dbReference>
<dbReference type="InterPro" id="IPR031167">
    <property type="entry name" value="G_OBG"/>
</dbReference>
<dbReference type="InterPro" id="IPR006073">
    <property type="entry name" value="GTP-bd"/>
</dbReference>
<dbReference type="InterPro" id="IPR014100">
    <property type="entry name" value="GTP-bd_Obg/CgtA"/>
</dbReference>
<dbReference type="InterPro" id="IPR036346">
    <property type="entry name" value="GTP-bd_prot_GTP1/OBG_C_sf"/>
</dbReference>
<dbReference type="InterPro" id="IPR006074">
    <property type="entry name" value="GTP1-OBG_CS"/>
</dbReference>
<dbReference type="InterPro" id="IPR006169">
    <property type="entry name" value="GTP1_OBG_dom"/>
</dbReference>
<dbReference type="InterPro" id="IPR036726">
    <property type="entry name" value="GTP1_OBG_dom_sf"/>
</dbReference>
<dbReference type="InterPro" id="IPR045086">
    <property type="entry name" value="OBG_GTPase"/>
</dbReference>
<dbReference type="InterPro" id="IPR015349">
    <property type="entry name" value="OCT_dom"/>
</dbReference>
<dbReference type="InterPro" id="IPR027417">
    <property type="entry name" value="P-loop_NTPase"/>
</dbReference>
<dbReference type="InterPro" id="IPR005225">
    <property type="entry name" value="Small_GTP-bd"/>
</dbReference>
<dbReference type="NCBIfam" id="TIGR02729">
    <property type="entry name" value="Obg_CgtA"/>
    <property type="match status" value="1"/>
</dbReference>
<dbReference type="NCBIfam" id="TIGR03595">
    <property type="entry name" value="Obg_CgtA_exten"/>
    <property type="match status" value="1"/>
</dbReference>
<dbReference type="NCBIfam" id="NF008955">
    <property type="entry name" value="PRK12297.1"/>
    <property type="match status" value="1"/>
</dbReference>
<dbReference type="NCBIfam" id="NF008956">
    <property type="entry name" value="PRK12299.1"/>
    <property type="match status" value="1"/>
</dbReference>
<dbReference type="NCBIfam" id="TIGR00231">
    <property type="entry name" value="small_GTP"/>
    <property type="match status" value="1"/>
</dbReference>
<dbReference type="PANTHER" id="PTHR11702">
    <property type="entry name" value="DEVELOPMENTALLY REGULATED GTP-BINDING PROTEIN-RELATED"/>
    <property type="match status" value="1"/>
</dbReference>
<dbReference type="PANTHER" id="PTHR11702:SF31">
    <property type="entry name" value="MITOCHONDRIAL RIBOSOME-ASSOCIATED GTPASE 2"/>
    <property type="match status" value="1"/>
</dbReference>
<dbReference type="Pfam" id="PF09269">
    <property type="entry name" value="DUF1967"/>
    <property type="match status" value="1"/>
</dbReference>
<dbReference type="Pfam" id="PF01018">
    <property type="entry name" value="GTP1_OBG"/>
    <property type="match status" value="1"/>
</dbReference>
<dbReference type="Pfam" id="PF01926">
    <property type="entry name" value="MMR_HSR1"/>
    <property type="match status" value="1"/>
</dbReference>
<dbReference type="PRINTS" id="PR00326">
    <property type="entry name" value="GTP1OBG"/>
</dbReference>
<dbReference type="SUPFAM" id="SSF102741">
    <property type="entry name" value="Obg GTP-binding protein C-terminal domain"/>
    <property type="match status" value="1"/>
</dbReference>
<dbReference type="SUPFAM" id="SSF82051">
    <property type="entry name" value="Obg GTP-binding protein N-terminal domain"/>
    <property type="match status" value="1"/>
</dbReference>
<dbReference type="SUPFAM" id="SSF52540">
    <property type="entry name" value="P-loop containing nucleoside triphosphate hydrolases"/>
    <property type="match status" value="1"/>
</dbReference>
<dbReference type="PROSITE" id="PS51710">
    <property type="entry name" value="G_OBG"/>
    <property type="match status" value="1"/>
</dbReference>
<dbReference type="PROSITE" id="PS00905">
    <property type="entry name" value="GTP1_OBG"/>
    <property type="match status" value="1"/>
</dbReference>
<dbReference type="PROSITE" id="PS51883">
    <property type="entry name" value="OBG"/>
    <property type="match status" value="1"/>
</dbReference>
<dbReference type="PROSITE" id="PS51881">
    <property type="entry name" value="OCT"/>
    <property type="match status" value="1"/>
</dbReference>
<gene>
    <name evidence="1" type="primary">obg</name>
    <name type="ordered locus">MYPU_3530</name>
</gene>
<evidence type="ECO:0000255" key="1">
    <source>
        <dbReference type="HAMAP-Rule" id="MF_01454"/>
    </source>
</evidence>
<evidence type="ECO:0000255" key="2">
    <source>
        <dbReference type="PROSITE-ProRule" id="PRU01229"/>
    </source>
</evidence>
<evidence type="ECO:0000255" key="3">
    <source>
        <dbReference type="PROSITE-ProRule" id="PRU01231"/>
    </source>
</evidence>
<sequence length="418" mass="46511">MKFIDEITLNVKAGKGGNGMIAFRREAHVDRGGPSGGDGGNGGNIYFVGDLGKNTLLHLYLQKSIVGNNGVNGGRKNLYGAAGEDKFIKVPVGTVVYEGQKVIADIVEEKPYLIAKGGRGGRGNTKFKTAKNKAPRISENGLPGESKKLTLVLKVLADVGFVGKPSAGKSTLLSVISNAKPTIADYDFTTLVPQLGLVKYFDNSFVVADLPGLIKGAHQGKGLGIRFLKHIERCKVIANVIDFGDENKNPLQDYQEIRNELKLYNLNLEEKDEVIVANKKDQECFEKKLEEFSKHYPNKKIIAISALKQENLDKLKEALWQSVKNTKDIVFELSEDEEVFINFEADFNVVHLGEGQYLVEGPKIHHFYQRIPLNTHDNLMRFNLILKKMGVWDELIKQGIQIGDSVKIYDYEFVWGNE</sequence>
<comment type="function">
    <text evidence="1">An essential GTPase which binds GTP, GDP and possibly (p)ppGpp with moderate affinity, with high nucleotide exchange rates and a fairly low GTP hydrolysis rate. Plays a role in control of the cell cycle, stress response, ribosome biogenesis and in those bacteria that undergo differentiation, in morphogenesis control.</text>
</comment>
<comment type="cofactor">
    <cofactor evidence="1">
        <name>Mg(2+)</name>
        <dbReference type="ChEBI" id="CHEBI:18420"/>
    </cofactor>
</comment>
<comment type="subunit">
    <text evidence="1">Monomer.</text>
</comment>
<comment type="subcellular location">
    <subcellularLocation>
        <location evidence="1">Cytoplasm</location>
    </subcellularLocation>
</comment>
<comment type="similarity">
    <text evidence="1">Belongs to the TRAFAC class OBG-HflX-like GTPase superfamily. OBG GTPase family.</text>
</comment>
<keyword id="KW-0963">Cytoplasm</keyword>
<keyword id="KW-0342">GTP-binding</keyword>
<keyword id="KW-0378">Hydrolase</keyword>
<keyword id="KW-0460">Magnesium</keyword>
<keyword id="KW-0479">Metal-binding</keyword>
<keyword id="KW-0547">Nucleotide-binding</keyword>
<keyword id="KW-1185">Reference proteome</keyword>
<name>OBG_MYCPU</name>
<reference key="1">
    <citation type="journal article" date="2001" name="Nucleic Acids Res.">
        <title>The complete genome sequence of the murine respiratory pathogen Mycoplasma pulmonis.</title>
        <authorList>
            <person name="Chambaud I."/>
            <person name="Heilig R."/>
            <person name="Ferris S."/>
            <person name="Barbe V."/>
            <person name="Samson D."/>
            <person name="Galisson F."/>
            <person name="Moszer I."/>
            <person name="Dybvig K."/>
            <person name="Wroblewski H."/>
            <person name="Viari A."/>
            <person name="Rocha E.P.C."/>
            <person name="Blanchard A."/>
        </authorList>
    </citation>
    <scope>NUCLEOTIDE SEQUENCE [LARGE SCALE GENOMIC DNA]</scope>
    <source>
        <strain>UAB CTIP</strain>
    </source>
</reference>
<feature type="chain" id="PRO_0000386076" description="GTPase Obg">
    <location>
        <begin position="1"/>
        <end position="418"/>
    </location>
</feature>
<feature type="domain" description="Obg" evidence="3">
    <location>
        <begin position="1"/>
        <end position="156"/>
    </location>
</feature>
<feature type="domain" description="OBG-type G" evidence="1">
    <location>
        <begin position="157"/>
        <end position="324"/>
    </location>
</feature>
<feature type="domain" description="OCT" evidence="2">
    <location>
        <begin position="339"/>
        <end position="417"/>
    </location>
</feature>
<feature type="binding site" evidence="1">
    <location>
        <begin position="163"/>
        <end position="170"/>
    </location>
    <ligand>
        <name>GTP</name>
        <dbReference type="ChEBI" id="CHEBI:37565"/>
    </ligand>
</feature>
<feature type="binding site" evidence="1">
    <location>
        <position position="170"/>
    </location>
    <ligand>
        <name>Mg(2+)</name>
        <dbReference type="ChEBI" id="CHEBI:18420"/>
    </ligand>
</feature>
<feature type="binding site" evidence="1">
    <location>
        <begin position="188"/>
        <end position="192"/>
    </location>
    <ligand>
        <name>GTP</name>
        <dbReference type="ChEBI" id="CHEBI:37565"/>
    </ligand>
</feature>
<feature type="binding site" evidence="1">
    <location>
        <position position="190"/>
    </location>
    <ligand>
        <name>Mg(2+)</name>
        <dbReference type="ChEBI" id="CHEBI:18420"/>
    </ligand>
</feature>
<feature type="binding site" evidence="1">
    <location>
        <begin position="209"/>
        <end position="212"/>
    </location>
    <ligand>
        <name>GTP</name>
        <dbReference type="ChEBI" id="CHEBI:37565"/>
    </ligand>
</feature>
<feature type="binding site" evidence="1">
    <location>
        <begin position="278"/>
        <end position="281"/>
    </location>
    <ligand>
        <name>GTP</name>
        <dbReference type="ChEBI" id="CHEBI:37565"/>
    </ligand>
</feature>
<feature type="binding site" evidence="1">
    <location>
        <begin position="305"/>
        <end position="307"/>
    </location>
    <ligand>
        <name>GTP</name>
        <dbReference type="ChEBI" id="CHEBI:37565"/>
    </ligand>
</feature>
<accession>Q98QK8</accession>